<proteinExistence type="evidence at protein level"/>
<protein>
    <recommendedName>
        <fullName evidence="6">5-methylphenazine-1-carboxylate 1-monooxygenase</fullName>
        <ecNumber evidence="2">1.14.13.218</ecNumber>
    </recommendedName>
</protein>
<reference key="1">
    <citation type="journal article" date="2000" name="Nature">
        <title>Complete genome sequence of Pseudomonas aeruginosa PAO1, an opportunistic pathogen.</title>
        <authorList>
            <person name="Stover C.K."/>
            <person name="Pham X.-Q.T."/>
            <person name="Erwin A.L."/>
            <person name="Mizoguchi S.D."/>
            <person name="Warrener P."/>
            <person name="Hickey M.J."/>
            <person name="Brinkman F.S.L."/>
            <person name="Hufnagle W.O."/>
            <person name="Kowalik D.J."/>
            <person name="Lagrou M."/>
            <person name="Garber R.L."/>
            <person name="Goltry L."/>
            <person name="Tolentino E."/>
            <person name="Westbrock-Wadman S."/>
            <person name="Yuan Y."/>
            <person name="Brody L.L."/>
            <person name="Coulter S.N."/>
            <person name="Folger K.R."/>
            <person name="Kas A."/>
            <person name="Larbig K."/>
            <person name="Lim R.M."/>
            <person name="Smith K.A."/>
            <person name="Spencer D.H."/>
            <person name="Wong G.K.-S."/>
            <person name="Wu Z."/>
            <person name="Paulsen I.T."/>
            <person name="Reizer J."/>
            <person name="Saier M.H. Jr."/>
            <person name="Hancock R.E.W."/>
            <person name="Lory S."/>
            <person name="Olson M.V."/>
        </authorList>
    </citation>
    <scope>NUCLEOTIDE SEQUENCE [LARGE SCALE GENOMIC DNA]</scope>
    <source>
        <strain>ATCC 15692 / DSM 22644 / CIP 104116 / JCM 14847 / LMG 12228 / 1C / PRS 101 / PAO1</strain>
    </source>
</reference>
<reference key="2">
    <citation type="journal article" date="2007" name="Biochemistry">
        <title>Structural and functional analysis of the pyocyanin biosynthetic protein PhzM from Pseudomonas aeruginosa.</title>
        <authorList>
            <person name="Parsons J.F."/>
            <person name="Greenhagen B.T."/>
            <person name="Shi K."/>
            <person name="Calabrese K."/>
            <person name="Robinson H."/>
            <person name="Ladner J.E."/>
        </authorList>
    </citation>
    <scope>FUNCTION</scope>
    <scope>CATALYTIC ACTIVITY</scope>
    <scope>PATHWAY</scope>
    <scope>SUBUNIT</scope>
</reference>
<reference key="3">
    <citation type="journal article" date="2006" name="Acta Crystallogr. F">
        <title>The purification, crystallization and preliminary structural characterization of FAD-dependent monooxygenase PhzS, a phenazine-modifying enzyme from Pseudomonas aeruginosa.</title>
        <authorList>
            <person name="Gohain N."/>
            <person name="Thomashow L.S."/>
            <person name="Mavrodi D.V."/>
            <person name="Blankenfeldt W."/>
        </authorList>
    </citation>
    <scope>CRYSTALLIZATION</scope>
</reference>
<reference evidence="8" key="4">
    <citation type="journal article" date="2008" name="Biochemistry">
        <title>Crystal structure of the pyocyanin biosynthetic protein PhzS.</title>
        <authorList>
            <person name="Greenhagen B.T."/>
            <person name="Shi K."/>
            <person name="Robinson H."/>
            <person name="Gamage S."/>
            <person name="Bera A.K."/>
            <person name="Ladner J.E."/>
            <person name="Parsons J.F."/>
        </authorList>
    </citation>
    <scope>X-RAY CRYSTALLOGRAPHY (2.40 ANGSTROMS) IN COMPLEX WITH FAD</scope>
    <scope>COFACTOR</scope>
</reference>
<reference evidence="9" key="5">
    <citation type="submission" date="2008-02" db="PDB data bank">
        <title>Crystal structure of the flavin-containing monooxygenase phzS from Pseudomonas aeruginosa.</title>
        <authorList>
            <consortium name="Northeast structural genomics consortium (NESG)"/>
            <person name="Vorobiev S.M."/>
            <person name="Chen Y."/>
            <person name="Seetharaman J."/>
            <person name="Wang D."/>
            <person name="Mao L."/>
            <person name="Xiao R."/>
            <person name="Acton T.B."/>
            <person name="Montelione G.T."/>
            <person name="Tong L."/>
            <person name="Hunt J.F."/>
        </authorList>
    </citation>
    <scope>X-RAY CRYSTALLOGRAPHY (1.90 ANGSTROMS) IN COMPLEX WITH FAD</scope>
    <scope>COFACTOR</scope>
</reference>
<dbReference type="EC" id="1.14.13.218" evidence="2"/>
<dbReference type="EMBL" id="AE004091">
    <property type="protein sequence ID" value="AAG07605.1"/>
    <property type="molecule type" value="Genomic_DNA"/>
</dbReference>
<dbReference type="PIR" id="E83119">
    <property type="entry name" value="E83119"/>
</dbReference>
<dbReference type="RefSeq" id="NP_252907.1">
    <property type="nucleotide sequence ID" value="NC_002516.2"/>
</dbReference>
<dbReference type="PDB" id="2RGJ">
    <property type="method" value="X-ray"/>
    <property type="resolution" value="2.40 A"/>
    <property type="chains" value="A=1-402"/>
</dbReference>
<dbReference type="PDB" id="3C96">
    <property type="method" value="X-ray"/>
    <property type="resolution" value="1.90 A"/>
    <property type="chains" value="A=1-402"/>
</dbReference>
<dbReference type="PDBsum" id="2RGJ"/>
<dbReference type="PDBsum" id="3C96"/>
<dbReference type="SMR" id="Q9HWG9"/>
<dbReference type="FunCoup" id="Q9HWG9">
    <property type="interactions" value="450"/>
</dbReference>
<dbReference type="STRING" id="208964.PA4217"/>
<dbReference type="PaxDb" id="208964-PA4217"/>
<dbReference type="DNASU" id="881836"/>
<dbReference type="GeneID" id="881836"/>
<dbReference type="KEGG" id="pae:PA4217"/>
<dbReference type="PATRIC" id="fig|208964.12.peg.4418"/>
<dbReference type="PseudoCAP" id="PA4217"/>
<dbReference type="HOGENOM" id="CLU_009665_19_5_6"/>
<dbReference type="InParanoid" id="Q9HWG9"/>
<dbReference type="OrthoDB" id="9782160at2"/>
<dbReference type="PhylomeDB" id="Q9HWG9"/>
<dbReference type="BioCyc" id="MetaCyc:MONOMER-16022"/>
<dbReference type="BioCyc" id="PAER208964:G1FZ6-4290-MONOMER"/>
<dbReference type="BRENDA" id="1.14.13.218">
    <property type="organism ID" value="5087"/>
</dbReference>
<dbReference type="UniPathway" id="UPA00235"/>
<dbReference type="EvolutionaryTrace" id="Q9HWG9"/>
<dbReference type="Proteomes" id="UP000002438">
    <property type="component" value="Chromosome"/>
</dbReference>
<dbReference type="GO" id="GO:0102169">
    <property type="term" value="F:5-methylphenazine-1-carboxylate 1-monooxygenase (NADH) activity"/>
    <property type="evidence" value="ECO:0007669"/>
    <property type="project" value="UniProtKB-EC"/>
</dbReference>
<dbReference type="GO" id="GO:0071949">
    <property type="term" value="F:FAD binding"/>
    <property type="evidence" value="ECO:0007669"/>
    <property type="project" value="InterPro"/>
</dbReference>
<dbReference type="GO" id="GO:0004497">
    <property type="term" value="F:monooxygenase activity"/>
    <property type="evidence" value="ECO:0000314"/>
    <property type="project" value="PseudoCAP"/>
</dbReference>
<dbReference type="Gene3D" id="3.30.9.30">
    <property type="match status" value="1"/>
</dbReference>
<dbReference type="Gene3D" id="3.50.50.60">
    <property type="entry name" value="FAD/NAD(P)-binding domain"/>
    <property type="match status" value="1"/>
</dbReference>
<dbReference type="InterPro" id="IPR002938">
    <property type="entry name" value="FAD-bd"/>
</dbReference>
<dbReference type="InterPro" id="IPR050493">
    <property type="entry name" value="FAD-dep_Monooxygenase_BioMet"/>
</dbReference>
<dbReference type="InterPro" id="IPR036188">
    <property type="entry name" value="FAD/NAD-bd_sf"/>
</dbReference>
<dbReference type="NCBIfam" id="NF005720">
    <property type="entry name" value="PRK07538.1"/>
    <property type="match status" value="1"/>
</dbReference>
<dbReference type="PANTHER" id="PTHR13789:SF268">
    <property type="entry name" value="5-METHYLPHENAZINE-1-CARBOXYLATE 1-MONOOXYGENASE"/>
    <property type="match status" value="1"/>
</dbReference>
<dbReference type="PANTHER" id="PTHR13789">
    <property type="entry name" value="MONOOXYGENASE"/>
    <property type="match status" value="1"/>
</dbReference>
<dbReference type="Pfam" id="PF01494">
    <property type="entry name" value="FAD_binding_3"/>
    <property type="match status" value="2"/>
</dbReference>
<dbReference type="PRINTS" id="PR00420">
    <property type="entry name" value="RNGMNOXGNASE"/>
</dbReference>
<dbReference type="SUPFAM" id="SSF54373">
    <property type="entry name" value="FAD-linked reductases, C-terminal domain"/>
    <property type="match status" value="1"/>
</dbReference>
<dbReference type="SUPFAM" id="SSF51905">
    <property type="entry name" value="FAD/NAD(P)-binding domain"/>
    <property type="match status" value="1"/>
</dbReference>
<accession>Q9HWG9</accession>
<gene>
    <name evidence="5" type="primary">phzS</name>
    <name evidence="7" type="ordered locus">PA4217</name>
</gene>
<feature type="chain" id="PRO_0000441708" description="5-methylphenazine-1-carboxylate 1-monooxygenase">
    <location>
        <begin position="1"/>
        <end position="402"/>
    </location>
</feature>
<feature type="region of interest" description="Disordered" evidence="1">
    <location>
        <begin position="368"/>
        <end position="402"/>
    </location>
</feature>
<feature type="compositionally biased region" description="Basic and acidic residues" evidence="1">
    <location>
        <begin position="368"/>
        <end position="385"/>
    </location>
</feature>
<feature type="binding site" evidence="3 4 8 9">
    <location>
        <begin position="14"/>
        <end position="15"/>
    </location>
    <ligand>
        <name>FAD</name>
        <dbReference type="ChEBI" id="CHEBI:57692"/>
    </ligand>
</feature>
<feature type="binding site" evidence="3 4 8 9">
    <location>
        <begin position="35"/>
        <end position="36"/>
    </location>
    <ligand>
        <name>FAD</name>
        <dbReference type="ChEBI" id="CHEBI:57692"/>
    </ligand>
</feature>
<feature type="binding site" evidence="3 4 8 9">
    <location>
        <begin position="43"/>
        <end position="45"/>
    </location>
    <ligand>
        <name>FAD</name>
        <dbReference type="ChEBI" id="CHEBI:57692"/>
    </ligand>
</feature>
<feature type="binding site" evidence="3 4 8 9">
    <location>
        <position position="106"/>
    </location>
    <ligand>
        <name>FAD</name>
        <dbReference type="ChEBI" id="CHEBI:57692"/>
    </ligand>
</feature>
<feature type="binding site" evidence="3 4 8 9">
    <location>
        <position position="132"/>
    </location>
    <ligand>
        <name>FAD</name>
        <dbReference type="ChEBI" id="CHEBI:57692"/>
    </ligand>
</feature>
<feature type="binding site" evidence="3 4 8 9">
    <location>
        <position position="191"/>
    </location>
    <ligand>
        <name>FAD</name>
        <dbReference type="ChEBI" id="CHEBI:57692"/>
    </ligand>
</feature>
<feature type="binding site" evidence="3 4 8 9">
    <location>
        <position position="310"/>
    </location>
    <ligand>
        <name>FAD</name>
        <dbReference type="ChEBI" id="CHEBI:57692"/>
    </ligand>
</feature>
<feature type="strand" evidence="11">
    <location>
        <begin position="6"/>
        <end position="10"/>
    </location>
</feature>
<feature type="helix" evidence="11">
    <location>
        <begin position="14"/>
        <end position="25"/>
    </location>
</feature>
<feature type="strand" evidence="11">
    <location>
        <begin position="29"/>
        <end position="39"/>
    </location>
</feature>
<feature type="strand" evidence="11">
    <location>
        <begin position="46"/>
        <end position="49"/>
    </location>
</feature>
<feature type="helix" evidence="11">
    <location>
        <begin position="51"/>
        <end position="59"/>
    </location>
</feature>
<feature type="helix" evidence="11">
    <location>
        <begin position="63"/>
        <end position="69"/>
    </location>
</feature>
<feature type="strand" evidence="11">
    <location>
        <begin position="70"/>
        <end position="73"/>
    </location>
</feature>
<feature type="strand" evidence="11">
    <location>
        <begin position="75"/>
        <end position="79"/>
    </location>
</feature>
<feature type="strand" evidence="11">
    <location>
        <begin position="85"/>
        <end position="90"/>
    </location>
</feature>
<feature type="helix" evidence="11">
    <location>
        <begin position="92"/>
        <end position="95"/>
    </location>
</feature>
<feature type="strand" evidence="11">
    <location>
        <begin position="101"/>
        <end position="105"/>
    </location>
</feature>
<feature type="helix" evidence="11">
    <location>
        <begin position="106"/>
        <end position="121"/>
    </location>
</feature>
<feature type="strand" evidence="11">
    <location>
        <begin position="125"/>
        <end position="138"/>
    </location>
</feature>
<feature type="strand" evidence="11">
    <location>
        <begin position="141"/>
        <end position="148"/>
    </location>
</feature>
<feature type="strand" evidence="11">
    <location>
        <begin position="153"/>
        <end position="163"/>
    </location>
</feature>
<feature type="helix" evidence="11">
    <location>
        <begin position="170"/>
        <end position="175"/>
    </location>
</feature>
<feature type="strand" evidence="11">
    <location>
        <begin position="183"/>
        <end position="197"/>
    </location>
</feature>
<feature type="strand" evidence="11">
    <location>
        <begin position="202"/>
        <end position="209"/>
    </location>
</feature>
<feature type="strand" evidence="11">
    <location>
        <begin position="215"/>
        <end position="220"/>
    </location>
</feature>
<feature type="helix" evidence="11">
    <location>
        <begin position="223"/>
        <end position="226"/>
    </location>
</feature>
<feature type="turn" evidence="11">
    <location>
        <begin position="227"/>
        <end position="229"/>
    </location>
</feature>
<feature type="strand" evidence="11">
    <location>
        <begin position="231"/>
        <end position="240"/>
    </location>
</feature>
<feature type="helix" evidence="11">
    <location>
        <begin position="241"/>
        <end position="244"/>
    </location>
</feature>
<feature type="helix" evidence="11">
    <location>
        <begin position="259"/>
        <end position="266"/>
    </location>
</feature>
<feature type="strand" evidence="10">
    <location>
        <begin position="272"/>
        <end position="274"/>
    </location>
</feature>
<feature type="helix" evidence="11">
    <location>
        <begin position="276"/>
        <end position="281"/>
    </location>
</feature>
<feature type="strand" evidence="11">
    <location>
        <begin position="284"/>
        <end position="293"/>
    </location>
</feature>
<feature type="strand" evidence="11">
    <location>
        <begin position="305"/>
        <end position="307"/>
    </location>
</feature>
<feature type="helix" evidence="11">
    <location>
        <begin position="310"/>
        <end position="313"/>
    </location>
</feature>
<feature type="helix" evidence="11">
    <location>
        <begin position="323"/>
        <end position="339"/>
    </location>
</feature>
<feature type="helix" evidence="11">
    <location>
        <begin position="343"/>
        <end position="377"/>
    </location>
</feature>
<name>PHZS_PSEAE</name>
<organism>
    <name type="scientific">Pseudomonas aeruginosa (strain ATCC 15692 / DSM 22644 / CIP 104116 / JCM 14847 / LMG 12228 / 1C / PRS 101 / PAO1)</name>
    <dbReference type="NCBI Taxonomy" id="208964"/>
    <lineage>
        <taxon>Bacteria</taxon>
        <taxon>Pseudomonadati</taxon>
        <taxon>Pseudomonadota</taxon>
        <taxon>Gammaproteobacteria</taxon>
        <taxon>Pseudomonadales</taxon>
        <taxon>Pseudomonadaceae</taxon>
        <taxon>Pseudomonas</taxon>
    </lineage>
</organism>
<evidence type="ECO:0000256" key="1">
    <source>
        <dbReference type="SAM" id="MobiDB-lite"/>
    </source>
</evidence>
<evidence type="ECO:0000269" key="2">
    <source>
    </source>
</evidence>
<evidence type="ECO:0000269" key="3">
    <source>
    </source>
</evidence>
<evidence type="ECO:0000269" key="4">
    <source ref="5"/>
</evidence>
<evidence type="ECO:0000303" key="5">
    <source>
    </source>
</evidence>
<evidence type="ECO:0000305" key="6"/>
<evidence type="ECO:0000312" key="7">
    <source>
        <dbReference type="EMBL" id="AAG07605.1"/>
    </source>
</evidence>
<evidence type="ECO:0007744" key="8">
    <source>
        <dbReference type="PDB" id="2RGJ"/>
    </source>
</evidence>
<evidence type="ECO:0007744" key="9">
    <source>
        <dbReference type="PDB" id="3C96"/>
    </source>
</evidence>
<evidence type="ECO:0007829" key="10">
    <source>
        <dbReference type="PDB" id="2RGJ"/>
    </source>
</evidence>
<evidence type="ECO:0007829" key="11">
    <source>
        <dbReference type="PDB" id="3C96"/>
    </source>
</evidence>
<comment type="function">
    <text evidence="2">Involved in the biosynthesis of pyocyanine, a blue-pigmented phenazine derivative, which plays a role in virulence. Catalyzes the oxidative decarboxylation of 5-methylphenazine-1-carboxylate (5-methyl-PCA) to pyocyanine. Can also act on phenazine-1-carboxylate (PCA), converting it into 1-hydroxyphenazine (1-HP). However, PCA is a poor substrate.</text>
</comment>
<comment type="catalytic activity">
    <reaction evidence="2">
        <text>5-methyl-phenazine-1-carboxylate + NADH + O2 + 2 H(+) = pyocyanin + CO2 + NAD(+) + H2O</text>
        <dbReference type="Rhea" id="RHEA:48976"/>
        <dbReference type="ChEBI" id="CHEBI:15377"/>
        <dbReference type="ChEBI" id="CHEBI:15378"/>
        <dbReference type="ChEBI" id="CHEBI:15379"/>
        <dbReference type="ChEBI" id="CHEBI:16526"/>
        <dbReference type="ChEBI" id="CHEBI:57540"/>
        <dbReference type="ChEBI" id="CHEBI:57945"/>
        <dbReference type="ChEBI" id="CHEBI:62220"/>
        <dbReference type="ChEBI" id="CHEBI:62221"/>
        <dbReference type="EC" id="1.14.13.218"/>
    </reaction>
</comment>
<comment type="cofactor">
    <cofactor evidence="3 4">
        <name>FAD</name>
        <dbReference type="ChEBI" id="CHEBI:57692"/>
    </cofactor>
</comment>
<comment type="pathway">
    <text evidence="2">Secondary metabolite biosynthesis; pyocyanine biosynthesis.</text>
</comment>
<comment type="subunit">
    <text evidence="2">Monomer in solution. Probably interacts transiently with PhzM.</text>
</comment>
<sequence length="402" mass="43645">MSEPIDILIAGAGIGGLSCALALHQAGIGKVTLLESSSEIRPLGVGINIQPAAVEALAELGLGPALAATAIPTHELRYIDQSGATVWSEPRGVEAGNAYPQYSIHRGELQMILLAAVRERLGQQAVRTGLGVERIEERDGRVLIGARDGHGKPQALGADVLVGADGIHSAVRAHLHPDQRPLSHGGITMWRGVTEFDRFLDGKTMIVANDEHWSRLVAYPISARHAAEGKSLVNWVCMVPSAAVGQLDNEADWNRDGRLEDVLPFFADWDLGWFDIRDLLTRNQLILQYPMVDRDPLPHWGRGRITLLGDAAHLMYPMGANGASQAILDGIELAAALARNADVAAALREYEEARRPTANKIILANREREKEEWAAASRPKTEKSAALEAITGSYRNQVERPR</sequence>
<keyword id="KW-0002">3D-structure</keyword>
<keyword id="KW-0274">FAD</keyword>
<keyword id="KW-0285">Flavoprotein</keyword>
<keyword id="KW-0503">Monooxygenase</keyword>
<keyword id="KW-0520">NAD</keyword>
<keyword id="KW-0560">Oxidoreductase</keyword>
<keyword id="KW-1185">Reference proteome</keyword>